<keyword id="KW-0687">Ribonucleoprotein</keyword>
<keyword id="KW-0689">Ribosomal protein</keyword>
<keyword id="KW-0694">RNA-binding</keyword>
<keyword id="KW-0699">rRNA-binding</keyword>
<protein>
    <recommendedName>
        <fullName evidence="1">Small ribosomal subunit protein bS20</fullName>
    </recommendedName>
    <alternativeName>
        <fullName evidence="3">30S ribosomal protein S20</fullName>
    </alternativeName>
</protein>
<evidence type="ECO:0000255" key="1">
    <source>
        <dbReference type="HAMAP-Rule" id="MF_00500"/>
    </source>
</evidence>
<evidence type="ECO:0000256" key="2">
    <source>
        <dbReference type="SAM" id="MobiDB-lite"/>
    </source>
</evidence>
<evidence type="ECO:0000305" key="3"/>
<sequence>MAPRKPSKKVGPQKRPSAEKRVITSKKKQLRNQSFKSKVRTILKKFELAVQSGDVESISAGLRSVYSIADKAVKRGIFKKGKADRVKSRTSERACPAA</sequence>
<organism>
    <name type="scientific">Chlamydia trachomatis serovar A (strain ATCC VR-571B / DSM 19440 / HAR-13)</name>
    <dbReference type="NCBI Taxonomy" id="315277"/>
    <lineage>
        <taxon>Bacteria</taxon>
        <taxon>Pseudomonadati</taxon>
        <taxon>Chlamydiota</taxon>
        <taxon>Chlamydiia</taxon>
        <taxon>Chlamydiales</taxon>
        <taxon>Chlamydiaceae</taxon>
        <taxon>Chlamydia/Chlamydophila group</taxon>
        <taxon>Chlamydia</taxon>
    </lineage>
</organism>
<proteinExistence type="inferred from homology"/>
<dbReference type="EMBL" id="CP000051">
    <property type="protein sequence ID" value="AAX50894.1"/>
    <property type="molecule type" value="Genomic_DNA"/>
</dbReference>
<dbReference type="RefSeq" id="WP_009871985.1">
    <property type="nucleotide sequence ID" value="NC_007429.1"/>
</dbReference>
<dbReference type="SMR" id="Q3KL78"/>
<dbReference type="KEGG" id="cta:CTA_0670"/>
<dbReference type="HOGENOM" id="CLU_160655_2_0_0"/>
<dbReference type="Proteomes" id="UP000002532">
    <property type="component" value="Chromosome"/>
</dbReference>
<dbReference type="GO" id="GO:0005829">
    <property type="term" value="C:cytosol"/>
    <property type="evidence" value="ECO:0007669"/>
    <property type="project" value="TreeGrafter"/>
</dbReference>
<dbReference type="GO" id="GO:0015935">
    <property type="term" value="C:small ribosomal subunit"/>
    <property type="evidence" value="ECO:0007669"/>
    <property type="project" value="TreeGrafter"/>
</dbReference>
<dbReference type="GO" id="GO:0070181">
    <property type="term" value="F:small ribosomal subunit rRNA binding"/>
    <property type="evidence" value="ECO:0007669"/>
    <property type="project" value="TreeGrafter"/>
</dbReference>
<dbReference type="GO" id="GO:0003735">
    <property type="term" value="F:structural constituent of ribosome"/>
    <property type="evidence" value="ECO:0007669"/>
    <property type="project" value="InterPro"/>
</dbReference>
<dbReference type="GO" id="GO:0006412">
    <property type="term" value="P:translation"/>
    <property type="evidence" value="ECO:0007669"/>
    <property type="project" value="UniProtKB-UniRule"/>
</dbReference>
<dbReference type="FunFam" id="1.20.58.110:FF:000006">
    <property type="entry name" value="30S ribosomal protein S20"/>
    <property type="match status" value="1"/>
</dbReference>
<dbReference type="Gene3D" id="1.20.58.110">
    <property type="entry name" value="Ribosomal protein S20"/>
    <property type="match status" value="1"/>
</dbReference>
<dbReference type="HAMAP" id="MF_00500">
    <property type="entry name" value="Ribosomal_bS20"/>
    <property type="match status" value="1"/>
</dbReference>
<dbReference type="InterPro" id="IPR002583">
    <property type="entry name" value="Ribosomal_bS20"/>
</dbReference>
<dbReference type="InterPro" id="IPR036510">
    <property type="entry name" value="Ribosomal_bS20_sf"/>
</dbReference>
<dbReference type="NCBIfam" id="TIGR00029">
    <property type="entry name" value="S20"/>
    <property type="match status" value="1"/>
</dbReference>
<dbReference type="PANTHER" id="PTHR33398">
    <property type="entry name" value="30S RIBOSOMAL PROTEIN S20"/>
    <property type="match status" value="1"/>
</dbReference>
<dbReference type="PANTHER" id="PTHR33398:SF1">
    <property type="entry name" value="SMALL RIBOSOMAL SUBUNIT PROTEIN BS20C"/>
    <property type="match status" value="1"/>
</dbReference>
<dbReference type="Pfam" id="PF01649">
    <property type="entry name" value="Ribosomal_S20p"/>
    <property type="match status" value="1"/>
</dbReference>
<dbReference type="SUPFAM" id="SSF46992">
    <property type="entry name" value="Ribosomal protein S20"/>
    <property type="match status" value="1"/>
</dbReference>
<name>RS20_CHLTA</name>
<comment type="function">
    <text evidence="1">Binds directly to 16S ribosomal RNA.</text>
</comment>
<comment type="similarity">
    <text evidence="1">Belongs to the bacterial ribosomal protein bS20 family.</text>
</comment>
<gene>
    <name evidence="1" type="primary">rpsT</name>
    <name type="ordered locus">CTA_0670</name>
</gene>
<reference key="1">
    <citation type="journal article" date="2005" name="Infect. Immun.">
        <title>Comparative genomic analysis of Chlamydia trachomatis oculotropic and genitotropic strains.</title>
        <authorList>
            <person name="Carlson J.H."/>
            <person name="Porcella S.F."/>
            <person name="McClarty G."/>
            <person name="Caldwell H.D."/>
        </authorList>
    </citation>
    <scope>NUCLEOTIDE SEQUENCE [LARGE SCALE GENOMIC DNA]</scope>
    <source>
        <strain>ATCC VR-571B / DSM 19440 / HAR-13</strain>
    </source>
</reference>
<feature type="chain" id="PRO_0000236430" description="Small ribosomal subunit protein bS20">
    <location>
        <begin position="1"/>
        <end position="98"/>
    </location>
</feature>
<feature type="region of interest" description="Disordered" evidence="2">
    <location>
        <begin position="1"/>
        <end position="31"/>
    </location>
</feature>
<feature type="compositionally biased region" description="Basic residues" evidence="2">
    <location>
        <begin position="1"/>
        <end position="12"/>
    </location>
</feature>
<accession>Q3KL78</accession>